<sequence>MKWLKQLQSLHTKLVIVYVLLIIIGMQIIGLYFTNNLEKELLDNFKKNITQYAKQLEISIEKVYDEKGSVNAQKDIQNLLSEYANRQEIGEIRFIDKDQIIIATTKQSNRSLINQKANDSSVQKALSLGQSNDHLILKDYGGGKDRVWVYNIPVKVDKKVIGNIYIESKINDVYNQLNNINQIFIVGTAISLLITVILGFFIARTITKPITDMRNQTVEMSRGNYTQRVKIYGNDEIGELALAFNNLSKRVQEAQANTESEKRRLDSVITHMSDGIIATDRRGRIRIVNDMALKMLGMAKEDIIGYYMLSVLSLEDEFKLEEIQENNDSFLLDLNEEEGLIARVNFSTIVQETGFVTGYIAVLHDVTEQQQVERERREFVANVSHELRTPLTSMNSYIEALEEGAWKDEELAPQFLSVTREETERMIRLVNDLLQLSKMDNESDQINKEIIDFNMFINKIINRHEMSAKDTTFIRDIPKKTIFTEFDPDKMTQVFDNVITNAMKYSRGDKRVEFHVKQNPLYNRMTIRIKDNGIGIPINKVDKIFDRFYRVDKARTRKMGGTGLGLAISKEIVEAHNGRIWANSVEGQGTSIFITLPCEVIEDGDWDE</sequence>
<accession>Q2YUQ2</accession>
<dbReference type="EC" id="2.7.13.3" evidence="1"/>
<dbReference type="EMBL" id="AJ938182">
    <property type="protein sequence ID" value="CAI79707.1"/>
    <property type="molecule type" value="Genomic_DNA"/>
</dbReference>
<dbReference type="RefSeq" id="WP_000871607.1">
    <property type="nucleotide sequence ID" value="NC_007622.1"/>
</dbReference>
<dbReference type="SMR" id="Q2YUQ2"/>
<dbReference type="KEGG" id="sab:SAB0019"/>
<dbReference type="HOGENOM" id="CLU_000445_89_2_9"/>
<dbReference type="GO" id="GO:0005886">
    <property type="term" value="C:plasma membrane"/>
    <property type="evidence" value="ECO:0007669"/>
    <property type="project" value="UniProtKB-SubCell"/>
</dbReference>
<dbReference type="GO" id="GO:0005524">
    <property type="term" value="F:ATP binding"/>
    <property type="evidence" value="ECO:0007669"/>
    <property type="project" value="UniProtKB-KW"/>
</dbReference>
<dbReference type="GO" id="GO:0046872">
    <property type="term" value="F:metal ion binding"/>
    <property type="evidence" value="ECO:0007669"/>
    <property type="project" value="UniProtKB-KW"/>
</dbReference>
<dbReference type="GO" id="GO:0000156">
    <property type="term" value="F:phosphorelay response regulator activity"/>
    <property type="evidence" value="ECO:0007669"/>
    <property type="project" value="TreeGrafter"/>
</dbReference>
<dbReference type="GO" id="GO:0000155">
    <property type="term" value="F:phosphorelay sensor kinase activity"/>
    <property type="evidence" value="ECO:0007669"/>
    <property type="project" value="InterPro"/>
</dbReference>
<dbReference type="GO" id="GO:0030295">
    <property type="term" value="F:protein kinase activator activity"/>
    <property type="evidence" value="ECO:0007669"/>
    <property type="project" value="TreeGrafter"/>
</dbReference>
<dbReference type="GO" id="GO:0007234">
    <property type="term" value="P:osmosensory signaling via phosphorelay pathway"/>
    <property type="evidence" value="ECO:0007669"/>
    <property type="project" value="TreeGrafter"/>
</dbReference>
<dbReference type="CDD" id="cd06225">
    <property type="entry name" value="HAMP"/>
    <property type="match status" value="1"/>
</dbReference>
<dbReference type="CDD" id="cd00075">
    <property type="entry name" value="HATPase"/>
    <property type="match status" value="1"/>
</dbReference>
<dbReference type="CDD" id="cd00082">
    <property type="entry name" value="HisKA"/>
    <property type="match status" value="1"/>
</dbReference>
<dbReference type="CDD" id="cd00130">
    <property type="entry name" value="PAS"/>
    <property type="match status" value="1"/>
</dbReference>
<dbReference type="FunFam" id="1.10.8.500:FF:000001">
    <property type="entry name" value="Cell wall metabolism sensor histidine kinase"/>
    <property type="match status" value="1"/>
</dbReference>
<dbReference type="FunFam" id="3.30.450.20:FF:000037">
    <property type="entry name" value="Cell wall metabolism sensor histidine kinase"/>
    <property type="match status" value="1"/>
</dbReference>
<dbReference type="FunFam" id="3.30.565.10:FF:000006">
    <property type="entry name" value="Sensor histidine kinase WalK"/>
    <property type="match status" value="1"/>
</dbReference>
<dbReference type="FunFam" id="1.10.287.130:FF:000001">
    <property type="entry name" value="Two-component sensor histidine kinase"/>
    <property type="match status" value="1"/>
</dbReference>
<dbReference type="Gene3D" id="1.10.287.130">
    <property type="match status" value="1"/>
</dbReference>
<dbReference type="Gene3D" id="1.10.8.500">
    <property type="entry name" value="HAMP domain in histidine kinase"/>
    <property type="match status" value="1"/>
</dbReference>
<dbReference type="Gene3D" id="3.30.565.10">
    <property type="entry name" value="Histidine kinase-like ATPase, C-terminal domain"/>
    <property type="match status" value="1"/>
</dbReference>
<dbReference type="Gene3D" id="3.30.450.20">
    <property type="entry name" value="PAS domain"/>
    <property type="match status" value="2"/>
</dbReference>
<dbReference type="InterPro" id="IPR003660">
    <property type="entry name" value="HAMP_dom"/>
</dbReference>
<dbReference type="InterPro" id="IPR036890">
    <property type="entry name" value="HATPase_C_sf"/>
</dbReference>
<dbReference type="InterPro" id="IPR005467">
    <property type="entry name" value="His_kinase_dom"/>
</dbReference>
<dbReference type="InterPro" id="IPR003661">
    <property type="entry name" value="HisK_dim/P_dom"/>
</dbReference>
<dbReference type="InterPro" id="IPR036097">
    <property type="entry name" value="HisK_dim/P_sf"/>
</dbReference>
<dbReference type="InterPro" id="IPR052545">
    <property type="entry name" value="Light-responsive_reg"/>
</dbReference>
<dbReference type="InterPro" id="IPR000014">
    <property type="entry name" value="PAS"/>
</dbReference>
<dbReference type="InterPro" id="IPR000700">
    <property type="entry name" value="PAS-assoc_C"/>
</dbReference>
<dbReference type="InterPro" id="IPR035965">
    <property type="entry name" value="PAS-like_dom_sf"/>
</dbReference>
<dbReference type="InterPro" id="IPR049814">
    <property type="entry name" value="Resp_reg_WalK"/>
</dbReference>
<dbReference type="InterPro" id="IPR029151">
    <property type="entry name" value="Sensor-like_sf"/>
</dbReference>
<dbReference type="InterPro" id="IPR004358">
    <property type="entry name" value="Sig_transdc_His_kin-like_C"/>
</dbReference>
<dbReference type="NCBIfam" id="NF033092">
    <property type="entry name" value="HK_WalK"/>
    <property type="match status" value="1"/>
</dbReference>
<dbReference type="NCBIfam" id="TIGR00229">
    <property type="entry name" value="sensory_box"/>
    <property type="match status" value="1"/>
</dbReference>
<dbReference type="PANTHER" id="PTHR42878:SF7">
    <property type="entry name" value="SENSOR HISTIDINE KINASE GLRK"/>
    <property type="match status" value="1"/>
</dbReference>
<dbReference type="PANTHER" id="PTHR42878">
    <property type="entry name" value="TWO-COMPONENT HISTIDINE KINASE"/>
    <property type="match status" value="1"/>
</dbReference>
<dbReference type="Pfam" id="PF23846">
    <property type="entry name" value="Cache_WalK"/>
    <property type="match status" value="1"/>
</dbReference>
<dbReference type="Pfam" id="PF00672">
    <property type="entry name" value="HAMP"/>
    <property type="match status" value="1"/>
</dbReference>
<dbReference type="Pfam" id="PF02518">
    <property type="entry name" value="HATPase_c"/>
    <property type="match status" value="1"/>
</dbReference>
<dbReference type="Pfam" id="PF00512">
    <property type="entry name" value="HisKA"/>
    <property type="match status" value="1"/>
</dbReference>
<dbReference type="Pfam" id="PF13426">
    <property type="entry name" value="PAS_9"/>
    <property type="match status" value="1"/>
</dbReference>
<dbReference type="PRINTS" id="PR00344">
    <property type="entry name" value="BCTRLSENSOR"/>
</dbReference>
<dbReference type="SMART" id="SM00304">
    <property type="entry name" value="HAMP"/>
    <property type="match status" value="1"/>
</dbReference>
<dbReference type="SMART" id="SM00387">
    <property type="entry name" value="HATPase_c"/>
    <property type="match status" value="1"/>
</dbReference>
<dbReference type="SMART" id="SM00388">
    <property type="entry name" value="HisKA"/>
    <property type="match status" value="1"/>
</dbReference>
<dbReference type="SMART" id="SM00091">
    <property type="entry name" value="PAS"/>
    <property type="match status" value="1"/>
</dbReference>
<dbReference type="SUPFAM" id="SSF55874">
    <property type="entry name" value="ATPase domain of HSP90 chaperone/DNA topoisomerase II/histidine kinase"/>
    <property type="match status" value="1"/>
</dbReference>
<dbReference type="SUPFAM" id="SSF158472">
    <property type="entry name" value="HAMP domain-like"/>
    <property type="match status" value="1"/>
</dbReference>
<dbReference type="SUPFAM" id="SSF47384">
    <property type="entry name" value="Homodimeric domain of signal transducing histidine kinase"/>
    <property type="match status" value="1"/>
</dbReference>
<dbReference type="SUPFAM" id="SSF55785">
    <property type="entry name" value="PYP-like sensor domain (PAS domain)"/>
    <property type="match status" value="1"/>
</dbReference>
<dbReference type="SUPFAM" id="SSF103190">
    <property type="entry name" value="Sensory domain-like"/>
    <property type="match status" value="1"/>
</dbReference>
<dbReference type="PROSITE" id="PS50885">
    <property type="entry name" value="HAMP"/>
    <property type="match status" value="1"/>
</dbReference>
<dbReference type="PROSITE" id="PS50109">
    <property type="entry name" value="HIS_KIN"/>
    <property type="match status" value="1"/>
</dbReference>
<dbReference type="PROSITE" id="PS50113">
    <property type="entry name" value="PAC"/>
    <property type="match status" value="1"/>
</dbReference>
<dbReference type="PROSITE" id="PS50112">
    <property type="entry name" value="PAS"/>
    <property type="match status" value="1"/>
</dbReference>
<feature type="chain" id="PRO_0000353051" description="Sensor protein kinase WalK">
    <location>
        <begin position="1"/>
        <end position="608"/>
    </location>
</feature>
<feature type="transmembrane region" description="Helical" evidence="4">
    <location>
        <begin position="14"/>
        <end position="34"/>
    </location>
</feature>
<feature type="transmembrane region" description="Helical" evidence="4">
    <location>
        <begin position="183"/>
        <end position="203"/>
    </location>
</feature>
<feature type="domain" description="HAMP" evidence="5">
    <location>
        <begin position="204"/>
        <end position="256"/>
    </location>
</feature>
<feature type="domain" description="PAS" evidence="7">
    <location>
        <begin position="261"/>
        <end position="331"/>
    </location>
</feature>
<feature type="domain" description="PAC" evidence="8">
    <location>
        <begin position="314"/>
        <end position="378"/>
    </location>
</feature>
<feature type="domain" description="Histidine kinase" evidence="6">
    <location>
        <begin position="382"/>
        <end position="600"/>
    </location>
</feature>
<feature type="binding site" evidence="3">
    <location>
        <position position="271"/>
    </location>
    <ligand>
        <name>Zn(2+)</name>
        <dbReference type="ChEBI" id="CHEBI:29105"/>
    </ligand>
</feature>
<feature type="binding site" evidence="3">
    <location>
        <position position="274"/>
    </location>
    <ligand>
        <name>Zn(2+)</name>
        <dbReference type="ChEBI" id="CHEBI:29105"/>
    </ligand>
</feature>
<feature type="binding site" evidence="3">
    <location>
        <position position="364"/>
    </location>
    <ligand>
        <name>Zn(2+)</name>
        <dbReference type="ChEBI" id="CHEBI:29105"/>
    </ligand>
</feature>
<feature type="binding site" evidence="3">
    <location>
        <position position="368"/>
    </location>
    <ligand>
        <name>Zn(2+)</name>
        <dbReference type="ChEBI" id="CHEBI:29105"/>
    </ligand>
</feature>
<feature type="modified residue" description="Phosphohistidine; by autocatalysis" evidence="6">
    <location>
        <position position="385"/>
    </location>
</feature>
<keyword id="KW-0067">ATP-binding</keyword>
<keyword id="KW-1003">Cell membrane</keyword>
<keyword id="KW-0418">Kinase</keyword>
<keyword id="KW-0472">Membrane</keyword>
<keyword id="KW-0479">Metal-binding</keyword>
<keyword id="KW-0547">Nucleotide-binding</keyword>
<keyword id="KW-0597">Phosphoprotein</keyword>
<keyword id="KW-0808">Transferase</keyword>
<keyword id="KW-0812">Transmembrane</keyword>
<keyword id="KW-1133">Transmembrane helix</keyword>
<keyword id="KW-0902">Two-component regulatory system</keyword>
<keyword id="KW-0862">Zinc</keyword>
<name>WALK_STAAB</name>
<proteinExistence type="inferred from homology"/>
<reference key="1">
    <citation type="journal article" date="2007" name="PLoS ONE">
        <title>Molecular correlates of host specialization in Staphylococcus aureus.</title>
        <authorList>
            <person name="Herron-Olson L."/>
            <person name="Fitzgerald J.R."/>
            <person name="Musser J.M."/>
            <person name="Kapur V."/>
        </authorList>
    </citation>
    <scope>NUCLEOTIDE SEQUENCE [LARGE SCALE GENOMIC DNA]</scope>
    <source>
        <strain>bovine RF122 / ET3-1</strain>
    </source>
</reference>
<protein>
    <recommendedName>
        <fullName evidence="9">Sensor protein kinase WalK</fullName>
        <ecNumber evidence="1">2.7.13.3</ecNumber>
    </recommendedName>
</protein>
<comment type="function">
    <text evidence="3">Member of the two-component regulatory system WalK/WalR that regulates genes involved in cell wall metabolism, virulence regulation, biofilm production, oxidative stress resistance and antibiotic resistance via direct or indirect regulation of autolysins. Functions as a sensor protein kinase which is autophosphorylated at a histidine residue in the dimerization domain and transfers its phosphate group to the conserved aspartic acid residue in the regulatory domain of WalR. In turn, WalR binds to the upstream promoter regions of the target genes to positively and negatively regulate their expression.</text>
</comment>
<comment type="catalytic activity">
    <reaction evidence="3">
        <text>ATP + protein L-histidine = ADP + protein N-phospho-L-histidine.</text>
        <dbReference type="EC" id="2.7.13.3"/>
    </reaction>
</comment>
<comment type="activity regulation">
    <text evidence="3">By zinc. Zinc-binding negatively regulates WalK kinase activity and thus autophosphorylation.</text>
</comment>
<comment type="subunit">
    <text evidence="2">Forms homodimers. Forms homooligomers.</text>
</comment>
<comment type="subcellular location">
    <subcellularLocation>
        <location evidence="9">Cell membrane</location>
        <topology evidence="4">Multi-pass membrane protein</topology>
    </subcellularLocation>
</comment>
<comment type="PTM">
    <text evidence="3">Autophosphorylated.</text>
</comment>
<gene>
    <name type="primary">walK</name>
    <name type="synonym">yycG</name>
    <name type="ordered locus">SAB0019</name>
</gene>
<organism>
    <name type="scientific">Staphylococcus aureus (strain bovine RF122 / ET3-1)</name>
    <dbReference type="NCBI Taxonomy" id="273036"/>
    <lineage>
        <taxon>Bacteria</taxon>
        <taxon>Bacillati</taxon>
        <taxon>Bacillota</taxon>
        <taxon>Bacilli</taxon>
        <taxon>Bacillales</taxon>
        <taxon>Staphylococcaceae</taxon>
        <taxon>Staphylococcus</taxon>
    </lineage>
</organism>
<evidence type="ECO:0000250" key="1">
    <source>
        <dbReference type="UniProtKB" id="O34206"/>
    </source>
</evidence>
<evidence type="ECO:0000250" key="2">
    <source>
        <dbReference type="UniProtKB" id="Q2G2U4"/>
    </source>
</evidence>
<evidence type="ECO:0000250" key="3">
    <source>
        <dbReference type="UniProtKB" id="Q9RDT3"/>
    </source>
</evidence>
<evidence type="ECO:0000255" key="4"/>
<evidence type="ECO:0000255" key="5">
    <source>
        <dbReference type="PROSITE-ProRule" id="PRU00102"/>
    </source>
</evidence>
<evidence type="ECO:0000255" key="6">
    <source>
        <dbReference type="PROSITE-ProRule" id="PRU00107"/>
    </source>
</evidence>
<evidence type="ECO:0000255" key="7">
    <source>
        <dbReference type="PROSITE-ProRule" id="PRU00140"/>
    </source>
</evidence>
<evidence type="ECO:0000255" key="8">
    <source>
        <dbReference type="PROSITE-ProRule" id="PRU00141"/>
    </source>
</evidence>
<evidence type="ECO:0000305" key="9"/>